<keyword id="KW-0520">NAD</keyword>
<keyword id="KW-0560">Oxidoreductase</keyword>
<keyword id="KW-1185">Reference proteome</keyword>
<protein>
    <recommendedName>
        <fullName evidence="4">D-xylose 1-dehydrogenase</fullName>
        <shortName evidence="5">XDH</shortName>
        <ecNumber evidence="2 3">1.1.1.175</ecNumber>
    </recommendedName>
</protein>
<name>XDH_CAUVC</name>
<comment type="function">
    <text evidence="2 3">Involved in the degradation of D-xylose (PubMed:22709678, PubMed:25073011). Catalyzes the initial reaction in the xylose utilization pathway by oxydizing D-xylose into D-xylonolactone (PubMed:22709678, PubMed:25073011). Shows some activity with L-arabinose and D-lyxose, but D-xylose is clearly the best substrate (PubMed:22709678). Has no activity with D-ribose, D-glucose, D-galactose or D-mannose (PubMed:22709678).</text>
</comment>
<comment type="catalytic activity">
    <reaction evidence="2 3">
        <text>D-xylose + NAD(+) = D-xylono-1,5-lactone + NADH + H(+)</text>
        <dbReference type="Rhea" id="RHEA:13861"/>
        <dbReference type="ChEBI" id="CHEBI:15378"/>
        <dbReference type="ChEBI" id="CHEBI:15867"/>
        <dbReference type="ChEBI" id="CHEBI:53455"/>
        <dbReference type="ChEBI" id="CHEBI:57540"/>
        <dbReference type="ChEBI" id="CHEBI:57945"/>
        <dbReference type="EC" id="1.1.1.175"/>
    </reaction>
    <physiologicalReaction direction="left-to-right" evidence="2 3">
        <dbReference type="Rhea" id="RHEA:13862"/>
    </physiologicalReaction>
</comment>
<comment type="biophysicochemical properties">
    <kinetics>
        <KM evidence="2">0.08 mM for D-xylose (at pH 9)</KM>
        <KM evidence="2">40 mM for L-arabinose (at pH 9)</KM>
        <KM evidence="2">0.46 mM for NAD(+) (at pH 9)</KM>
        <text evidence="2">kcat is 1360 min(-1) with D-xylose as substrate (at pH 9). kcat is 1455 min(-1) with L-arabinose as substrate (at pH 9). kcat is 1860 min(-1) with NAD(+) as substrate (at pH 9).</text>
    </kinetics>
    <phDependence>
        <text evidence="2">Optimum pH is 9 (PubMed:22709678). Remains active over a wide pH range from pH 7 to 10 (PubMed:22709678).</text>
    </phDependence>
</comment>
<comment type="similarity">
    <text evidence="5">Belongs to the short-chain dehydrogenases/reductases (SDR) family.</text>
</comment>
<proteinExistence type="evidence at protein level"/>
<feature type="chain" id="PRO_0000456762" description="D-xylose 1-dehydrogenase">
    <location>
        <begin position="1"/>
        <end position="248"/>
    </location>
</feature>
<feature type="active site" description="Proton acceptor" evidence="1">
    <location>
        <position position="156"/>
    </location>
</feature>
<feature type="binding site" evidence="1">
    <location>
        <position position="42"/>
    </location>
    <ligand>
        <name>NAD(+)</name>
        <dbReference type="ChEBI" id="CHEBI:57540"/>
    </ligand>
</feature>
<feature type="binding site" evidence="1">
    <location>
        <position position="68"/>
    </location>
    <ligand>
        <name>NAD(+)</name>
        <dbReference type="ChEBI" id="CHEBI:57540"/>
    </ligand>
</feature>
<feature type="binding site" evidence="1">
    <location>
        <position position="91"/>
    </location>
    <ligand>
        <name>NAD(+)</name>
        <dbReference type="ChEBI" id="CHEBI:57540"/>
    </ligand>
</feature>
<feature type="binding site" evidence="1">
    <location>
        <position position="156"/>
    </location>
    <ligand>
        <name>NAD(+)</name>
        <dbReference type="ChEBI" id="CHEBI:57540"/>
    </ligand>
</feature>
<feature type="binding site" evidence="1">
    <location>
        <position position="160"/>
    </location>
    <ligand>
        <name>NAD(+)</name>
        <dbReference type="ChEBI" id="CHEBI:57540"/>
    </ligand>
</feature>
<feature type="binding site" evidence="1">
    <location>
        <position position="189"/>
    </location>
    <ligand>
        <name>NAD(+)</name>
        <dbReference type="ChEBI" id="CHEBI:57540"/>
    </ligand>
</feature>
<feature type="binding site" evidence="1">
    <location>
        <position position="191"/>
    </location>
    <ligand>
        <name>NAD(+)</name>
        <dbReference type="ChEBI" id="CHEBI:57540"/>
    </ligand>
</feature>
<dbReference type="EC" id="1.1.1.175" evidence="2 3"/>
<dbReference type="EMBL" id="AE005673">
    <property type="protein sequence ID" value="AAK22806.1"/>
    <property type="molecule type" value="Genomic_DNA"/>
</dbReference>
<dbReference type="PIR" id="B87351">
    <property type="entry name" value="B87351"/>
</dbReference>
<dbReference type="RefSeq" id="NP_419638.1">
    <property type="nucleotide sequence ID" value="NC_002696.2"/>
</dbReference>
<dbReference type="RefSeq" id="WP_010918706.1">
    <property type="nucleotide sequence ID" value="NC_002696.2"/>
</dbReference>
<dbReference type="SMR" id="Q9A9Z0"/>
<dbReference type="STRING" id="190650.CC_0821"/>
<dbReference type="EnsemblBacteria" id="AAK22806">
    <property type="protein sequence ID" value="AAK22806"/>
    <property type="gene ID" value="CC_0821"/>
</dbReference>
<dbReference type="KEGG" id="ccr:CC_0821"/>
<dbReference type="PATRIC" id="fig|190650.5.peg.834"/>
<dbReference type="eggNOG" id="COG1028">
    <property type="taxonomic scope" value="Bacteria"/>
</dbReference>
<dbReference type="HOGENOM" id="CLU_010194_1_0_5"/>
<dbReference type="BioCyc" id="CAULO:CC0821-MONOMER"/>
<dbReference type="Proteomes" id="UP000001816">
    <property type="component" value="Chromosome"/>
</dbReference>
<dbReference type="GO" id="GO:0016491">
    <property type="term" value="F:oxidoreductase activity"/>
    <property type="evidence" value="ECO:0007669"/>
    <property type="project" value="UniProtKB-KW"/>
</dbReference>
<dbReference type="CDD" id="cd05233">
    <property type="entry name" value="SDR_c"/>
    <property type="match status" value="1"/>
</dbReference>
<dbReference type="FunFam" id="3.40.50.720:FF:000084">
    <property type="entry name" value="Short-chain dehydrogenase reductase"/>
    <property type="match status" value="1"/>
</dbReference>
<dbReference type="Gene3D" id="3.40.50.720">
    <property type="entry name" value="NAD(P)-binding Rossmann-like Domain"/>
    <property type="match status" value="1"/>
</dbReference>
<dbReference type="InterPro" id="IPR036291">
    <property type="entry name" value="NAD(P)-bd_dom_sf"/>
</dbReference>
<dbReference type="InterPro" id="IPR002347">
    <property type="entry name" value="SDR_fam"/>
</dbReference>
<dbReference type="PANTHER" id="PTHR43639">
    <property type="entry name" value="OXIDOREDUCTASE, SHORT-CHAIN DEHYDROGENASE/REDUCTASE FAMILY (AFU_ORTHOLOGUE AFUA_5G02870)"/>
    <property type="match status" value="1"/>
</dbReference>
<dbReference type="PANTHER" id="PTHR43639:SF1">
    <property type="entry name" value="SHORT-CHAIN DEHYDROGENASE_REDUCTASE FAMILY PROTEIN"/>
    <property type="match status" value="1"/>
</dbReference>
<dbReference type="Pfam" id="PF13561">
    <property type="entry name" value="adh_short_C2"/>
    <property type="match status" value="1"/>
</dbReference>
<dbReference type="PRINTS" id="PR00081">
    <property type="entry name" value="GDHRDH"/>
</dbReference>
<dbReference type="PRINTS" id="PR00080">
    <property type="entry name" value="SDRFAMILY"/>
</dbReference>
<dbReference type="SUPFAM" id="SSF51735">
    <property type="entry name" value="NAD(P)-binding Rossmann-fold domains"/>
    <property type="match status" value="1"/>
</dbReference>
<sequence>MSSAIYPSLKGKRVVITGGGSGIGAGLTAGFARQGAEVIFLDIADEDSRALEAELAGSPIPPVYKRCDLMNLEAIKAVFAEIGDVDVLVNNAGNDDRHKLADVTGAYWDERINVNLRHMLFCTQAVAPGMKKRGGGAVINFGSISWHLGLEDLVLYETAKAGIEGMTRALARELGPDDIRVTCVVPGNVKTKRQEKWYTPEGEAQIVAAQCLKGRIVPENVAALVLFLASDDASLCTGHEYWIDAGWR</sequence>
<accession>Q9A9Z0</accession>
<organism>
    <name type="scientific">Caulobacter vibrioides (strain ATCC 19089 / CIP 103742 / CB 15)</name>
    <name type="common">Caulobacter crescentus</name>
    <dbReference type="NCBI Taxonomy" id="190650"/>
    <lineage>
        <taxon>Bacteria</taxon>
        <taxon>Pseudomonadati</taxon>
        <taxon>Pseudomonadota</taxon>
        <taxon>Alphaproteobacteria</taxon>
        <taxon>Caulobacterales</taxon>
        <taxon>Caulobacteraceae</taxon>
        <taxon>Caulobacter</taxon>
    </lineage>
</organism>
<reference key="1">
    <citation type="journal article" date="2001" name="Proc. Natl. Acad. Sci. U.S.A.">
        <title>Complete genome sequence of Caulobacter crescentus.</title>
        <authorList>
            <person name="Nierman W.C."/>
            <person name="Feldblyum T.V."/>
            <person name="Laub M.T."/>
            <person name="Paulsen I.T."/>
            <person name="Nelson K.E."/>
            <person name="Eisen J.A."/>
            <person name="Heidelberg J.F."/>
            <person name="Alley M.R.K."/>
            <person name="Ohta N."/>
            <person name="Maddock J.R."/>
            <person name="Potocka I."/>
            <person name="Nelson W.C."/>
            <person name="Newton A."/>
            <person name="Stephens C."/>
            <person name="Phadke N.D."/>
            <person name="Ely B."/>
            <person name="DeBoy R.T."/>
            <person name="Dodson R.J."/>
            <person name="Durkin A.S."/>
            <person name="Gwinn M.L."/>
            <person name="Haft D.H."/>
            <person name="Kolonay J.F."/>
            <person name="Smit J."/>
            <person name="Craven M.B."/>
            <person name="Khouri H.M."/>
            <person name="Shetty J."/>
            <person name="Berry K.J."/>
            <person name="Utterback T.R."/>
            <person name="Tran K."/>
            <person name="Wolf A.M."/>
            <person name="Vamathevan J.J."/>
            <person name="Ermolaeva M.D."/>
            <person name="White O."/>
            <person name="Salzberg S.L."/>
            <person name="Venter J.C."/>
            <person name="Shapiro L."/>
            <person name="Fraser C.M."/>
        </authorList>
    </citation>
    <scope>NUCLEOTIDE SEQUENCE [LARGE SCALE GENOMIC DNA]</scope>
    <source>
        <strain>ATCC 19089 / CIP 103742 / CB 15</strain>
    </source>
</reference>
<reference key="2">
    <citation type="journal article" date="2012" name="Metab. Eng.">
        <title>Metabolic engineering of Saccharomyces cerevisiae for bioconversion of D-xylose to D-xylonate.</title>
        <authorList>
            <person name="Toivari M."/>
            <person name="Nygaard Y."/>
            <person name="Kumpula E.P."/>
            <person name="Vehkomaeki M.L."/>
            <person name="Bencina M."/>
            <person name="Valkonen M."/>
            <person name="Maaheimo H."/>
            <person name="Andberg M."/>
            <person name="Koivula A."/>
            <person name="Ruohonen L."/>
            <person name="Penttilae M."/>
            <person name="Wiebe M.G."/>
        </authorList>
    </citation>
    <scope>FUNCTION</scope>
    <scope>CATALYTIC ACTIVITY</scope>
    <scope>BIOPHYSICOCHEMICAL PROPERTIES</scope>
</reference>
<reference key="3">
    <citation type="journal article" date="2014" name="Metab. Eng.">
        <title>Single cell and in vivo analyses elucidate the effect of xylC lactonase during production of D-xylonate in Saccharomyces cerevisiae.</title>
        <authorList>
            <person name="Nygaard Y."/>
            <person name="Maaheimo H."/>
            <person name="Mojzita D."/>
            <person name="Toivari M."/>
            <person name="Wiebe M."/>
            <person name="Resnekov O."/>
            <person name="Gustavo Pesce C."/>
            <person name="Ruohonen L."/>
            <person name="Penttilae M."/>
        </authorList>
    </citation>
    <scope>FUNCTION</scope>
    <scope>CATALYTIC ACTIVITY</scope>
</reference>
<gene>
    <name evidence="4" type="primary">xylB</name>
    <name evidence="6" type="ordered locus">CC_0821</name>
</gene>
<evidence type="ECO:0000250" key="1">
    <source>
        <dbReference type="UniProtKB" id="P9WGT1"/>
    </source>
</evidence>
<evidence type="ECO:0000269" key="2">
    <source>
    </source>
</evidence>
<evidence type="ECO:0000269" key="3">
    <source>
    </source>
</evidence>
<evidence type="ECO:0000303" key="4">
    <source>
    </source>
</evidence>
<evidence type="ECO:0000305" key="5"/>
<evidence type="ECO:0000312" key="6">
    <source>
        <dbReference type="EMBL" id="AAK22806.1"/>
    </source>
</evidence>